<proteinExistence type="inferred from homology"/>
<evidence type="ECO:0000255" key="1">
    <source>
        <dbReference type="HAMAP-Rule" id="MF_01458"/>
    </source>
</evidence>
<protein>
    <recommendedName>
        <fullName evidence="1">ATP-dependent zinc metalloprotease FtsH</fullName>
        <ecNumber evidence="1">3.4.24.-</ecNumber>
    </recommendedName>
</protein>
<sequence length="641" mass="70955">MNKQQKPKRSPLRPDYLVIVIIILLAIGMYFFFTEMMAPKVKQFDEFEFIAAIESGQIATVRSEYVGGDNFNLWEVTGTFTTGNAPEGVGSYVIILYGDRLNNIQDIIITYNELNPSTPITVSFVPHVSVDFWNIISTLLLIAAPIVLVVIMFRSMSSQSNKAQDFTKNRAKLSQGRKVKFSDIAGADEEKAEMAELIDFLKNPKKYADMGARVPKGVLLVGQPGTGKTLLAKAVAGEAQVPFFSISGSDFVELYVGVGASRVRDLFKVAKQSAPCIIFIDEIDAVGRQRGAGMGGGNDEREQTLNQLLVEMDGFSANLGIIIMAATNRPDVLDPALLRPGRFDRQITMQVPDQKSREEILKVHARSKKLDPTIKFSEVAMRIPGFTGADIENLLNEAALLAARESRTVISMQDIDEAADRVTMGPAKKSRKYSPNEKKMVAYHEAGHAVIGLKVNLASTVQKVTIVPRGRAGGYALYTPVEEKFNYAKSELLAMITSALGGRVAEEIMFDDVTTGAYDDFKRATKLARSMVTEYGMSDLGPIQYESDSGNVFLGRDYLKDKNFSDAVALEIDREVRAIITECYEHARKVINENKNLLDNIAKYLIAVETLTKTDIDEIAATGQLQWWDNREVEEDSKKSE</sequence>
<comment type="function">
    <text evidence="1">Acts as a processive, ATP-dependent zinc metallopeptidase for both cytoplasmic and membrane proteins. Plays a role in the quality control of integral membrane proteins.</text>
</comment>
<comment type="cofactor">
    <cofactor evidence="1">
        <name>Zn(2+)</name>
        <dbReference type="ChEBI" id="CHEBI:29105"/>
    </cofactor>
    <text evidence="1">Binds 1 zinc ion per subunit.</text>
</comment>
<comment type="subunit">
    <text evidence="1">Homohexamer.</text>
</comment>
<comment type="subcellular location">
    <subcellularLocation>
        <location evidence="1">Cell membrane</location>
        <topology evidence="1">Multi-pass membrane protein</topology>
        <orientation evidence="1">Cytoplasmic side</orientation>
    </subcellularLocation>
</comment>
<comment type="similarity">
    <text evidence="1">In the central section; belongs to the AAA ATPase family.</text>
</comment>
<comment type="similarity">
    <text evidence="1">In the C-terminal section; belongs to the peptidase M41 family.</text>
</comment>
<keyword id="KW-0067">ATP-binding</keyword>
<keyword id="KW-1003">Cell membrane</keyword>
<keyword id="KW-0378">Hydrolase</keyword>
<keyword id="KW-0472">Membrane</keyword>
<keyword id="KW-0479">Metal-binding</keyword>
<keyword id="KW-0482">Metalloprotease</keyword>
<keyword id="KW-0547">Nucleotide-binding</keyword>
<keyword id="KW-0645">Protease</keyword>
<keyword id="KW-1185">Reference proteome</keyword>
<keyword id="KW-0812">Transmembrane</keyword>
<keyword id="KW-1133">Transmembrane helix</keyword>
<keyword id="KW-0862">Zinc</keyword>
<feature type="chain" id="PRO_0000400318" description="ATP-dependent zinc metalloprotease FtsH">
    <location>
        <begin position="1"/>
        <end position="641"/>
    </location>
</feature>
<feature type="topological domain" description="Cytoplasmic" evidence="1">
    <location>
        <begin position="1"/>
        <end position="16"/>
    </location>
</feature>
<feature type="transmembrane region" description="Helical" evidence="1">
    <location>
        <begin position="17"/>
        <end position="37"/>
    </location>
</feature>
<feature type="topological domain" description="Extracellular" evidence="1">
    <location>
        <begin position="38"/>
        <end position="131"/>
    </location>
</feature>
<feature type="transmembrane region" description="Helical" evidence="1">
    <location>
        <begin position="132"/>
        <end position="152"/>
    </location>
</feature>
<feature type="topological domain" description="Cytoplasmic" evidence="1">
    <location>
        <begin position="153"/>
        <end position="641"/>
    </location>
</feature>
<feature type="active site" evidence="1">
    <location>
        <position position="445"/>
    </location>
</feature>
<feature type="binding site" evidence="1">
    <location>
        <begin position="222"/>
        <end position="229"/>
    </location>
    <ligand>
        <name>ATP</name>
        <dbReference type="ChEBI" id="CHEBI:30616"/>
    </ligand>
</feature>
<feature type="binding site" evidence="1">
    <location>
        <position position="444"/>
    </location>
    <ligand>
        <name>Zn(2+)</name>
        <dbReference type="ChEBI" id="CHEBI:29105"/>
        <note>catalytic</note>
    </ligand>
</feature>
<feature type="binding site" evidence="1">
    <location>
        <position position="448"/>
    </location>
    <ligand>
        <name>Zn(2+)</name>
        <dbReference type="ChEBI" id="CHEBI:29105"/>
        <note>catalytic</note>
    </ligand>
</feature>
<feature type="binding site" evidence="1">
    <location>
        <position position="520"/>
    </location>
    <ligand>
        <name>Zn(2+)</name>
        <dbReference type="ChEBI" id="CHEBI:29105"/>
        <note>catalytic</note>
    </ligand>
</feature>
<gene>
    <name evidence="1" type="primary">ftsH</name>
    <name type="ordered locus">ACL_1386</name>
</gene>
<name>FTSH_ACHLI</name>
<dbReference type="EC" id="3.4.24.-" evidence="1"/>
<dbReference type="EMBL" id="CP000896">
    <property type="protein sequence ID" value="ABX81977.1"/>
    <property type="molecule type" value="Genomic_DNA"/>
</dbReference>
<dbReference type="RefSeq" id="WP_012243308.1">
    <property type="nucleotide sequence ID" value="NC_010163.1"/>
</dbReference>
<dbReference type="SMR" id="A9NE17"/>
<dbReference type="STRING" id="441768.ACL_1386"/>
<dbReference type="MEROPS" id="M41.009"/>
<dbReference type="GeneID" id="41339515"/>
<dbReference type="KEGG" id="acl:ACL_1386"/>
<dbReference type="eggNOG" id="COG0465">
    <property type="taxonomic scope" value="Bacteria"/>
</dbReference>
<dbReference type="HOGENOM" id="CLU_000688_16_2_14"/>
<dbReference type="OrthoDB" id="9809379at2"/>
<dbReference type="Proteomes" id="UP000008558">
    <property type="component" value="Chromosome"/>
</dbReference>
<dbReference type="GO" id="GO:0005886">
    <property type="term" value="C:plasma membrane"/>
    <property type="evidence" value="ECO:0007669"/>
    <property type="project" value="UniProtKB-SubCell"/>
</dbReference>
<dbReference type="GO" id="GO:0005524">
    <property type="term" value="F:ATP binding"/>
    <property type="evidence" value="ECO:0007669"/>
    <property type="project" value="UniProtKB-UniRule"/>
</dbReference>
<dbReference type="GO" id="GO:0016887">
    <property type="term" value="F:ATP hydrolysis activity"/>
    <property type="evidence" value="ECO:0007669"/>
    <property type="project" value="UniProtKB-UniRule"/>
</dbReference>
<dbReference type="GO" id="GO:0004176">
    <property type="term" value="F:ATP-dependent peptidase activity"/>
    <property type="evidence" value="ECO:0007669"/>
    <property type="project" value="InterPro"/>
</dbReference>
<dbReference type="GO" id="GO:0004222">
    <property type="term" value="F:metalloendopeptidase activity"/>
    <property type="evidence" value="ECO:0007669"/>
    <property type="project" value="InterPro"/>
</dbReference>
<dbReference type="GO" id="GO:0008270">
    <property type="term" value="F:zinc ion binding"/>
    <property type="evidence" value="ECO:0007669"/>
    <property type="project" value="UniProtKB-UniRule"/>
</dbReference>
<dbReference type="GO" id="GO:0030163">
    <property type="term" value="P:protein catabolic process"/>
    <property type="evidence" value="ECO:0007669"/>
    <property type="project" value="UniProtKB-UniRule"/>
</dbReference>
<dbReference type="GO" id="GO:0006508">
    <property type="term" value="P:proteolysis"/>
    <property type="evidence" value="ECO:0007669"/>
    <property type="project" value="UniProtKB-KW"/>
</dbReference>
<dbReference type="CDD" id="cd19501">
    <property type="entry name" value="RecA-like_FtsH"/>
    <property type="match status" value="1"/>
</dbReference>
<dbReference type="FunFam" id="1.10.8.60:FF:000001">
    <property type="entry name" value="ATP-dependent zinc metalloprotease FtsH"/>
    <property type="match status" value="1"/>
</dbReference>
<dbReference type="FunFam" id="1.20.58.760:FF:000001">
    <property type="entry name" value="ATP-dependent zinc metalloprotease FtsH"/>
    <property type="match status" value="1"/>
</dbReference>
<dbReference type="FunFam" id="3.40.50.300:FF:000001">
    <property type="entry name" value="ATP-dependent zinc metalloprotease FtsH"/>
    <property type="match status" value="1"/>
</dbReference>
<dbReference type="Gene3D" id="1.10.8.60">
    <property type="match status" value="1"/>
</dbReference>
<dbReference type="Gene3D" id="3.40.50.300">
    <property type="entry name" value="P-loop containing nucleotide triphosphate hydrolases"/>
    <property type="match status" value="1"/>
</dbReference>
<dbReference type="Gene3D" id="1.20.58.760">
    <property type="entry name" value="Peptidase M41"/>
    <property type="match status" value="1"/>
</dbReference>
<dbReference type="HAMAP" id="MF_01458">
    <property type="entry name" value="FtsH"/>
    <property type="match status" value="1"/>
</dbReference>
<dbReference type="InterPro" id="IPR003593">
    <property type="entry name" value="AAA+_ATPase"/>
</dbReference>
<dbReference type="InterPro" id="IPR041569">
    <property type="entry name" value="AAA_lid_3"/>
</dbReference>
<dbReference type="InterPro" id="IPR003959">
    <property type="entry name" value="ATPase_AAA_core"/>
</dbReference>
<dbReference type="InterPro" id="IPR003960">
    <property type="entry name" value="ATPase_AAA_CS"/>
</dbReference>
<dbReference type="InterPro" id="IPR005936">
    <property type="entry name" value="FtsH"/>
</dbReference>
<dbReference type="InterPro" id="IPR027417">
    <property type="entry name" value="P-loop_NTPase"/>
</dbReference>
<dbReference type="InterPro" id="IPR000642">
    <property type="entry name" value="Peptidase_M41"/>
</dbReference>
<dbReference type="InterPro" id="IPR037219">
    <property type="entry name" value="Peptidase_M41-like"/>
</dbReference>
<dbReference type="NCBIfam" id="TIGR01241">
    <property type="entry name" value="FtsH_fam"/>
    <property type="match status" value="1"/>
</dbReference>
<dbReference type="PANTHER" id="PTHR23076:SF97">
    <property type="entry name" value="ATP-DEPENDENT ZINC METALLOPROTEASE YME1L1"/>
    <property type="match status" value="1"/>
</dbReference>
<dbReference type="PANTHER" id="PTHR23076">
    <property type="entry name" value="METALLOPROTEASE M41 FTSH"/>
    <property type="match status" value="1"/>
</dbReference>
<dbReference type="Pfam" id="PF00004">
    <property type="entry name" value="AAA"/>
    <property type="match status" value="1"/>
</dbReference>
<dbReference type="Pfam" id="PF17862">
    <property type="entry name" value="AAA_lid_3"/>
    <property type="match status" value="1"/>
</dbReference>
<dbReference type="Pfam" id="PF01434">
    <property type="entry name" value="Peptidase_M41"/>
    <property type="match status" value="1"/>
</dbReference>
<dbReference type="SMART" id="SM00382">
    <property type="entry name" value="AAA"/>
    <property type="match status" value="1"/>
</dbReference>
<dbReference type="SUPFAM" id="SSF140990">
    <property type="entry name" value="FtsH protease domain-like"/>
    <property type="match status" value="1"/>
</dbReference>
<dbReference type="SUPFAM" id="SSF52540">
    <property type="entry name" value="P-loop containing nucleoside triphosphate hydrolases"/>
    <property type="match status" value="1"/>
</dbReference>
<dbReference type="PROSITE" id="PS00674">
    <property type="entry name" value="AAA"/>
    <property type="match status" value="1"/>
</dbReference>
<accession>A9NE17</accession>
<organism>
    <name type="scientific">Acholeplasma laidlawii (strain PG-8A)</name>
    <dbReference type="NCBI Taxonomy" id="441768"/>
    <lineage>
        <taxon>Bacteria</taxon>
        <taxon>Bacillati</taxon>
        <taxon>Mycoplasmatota</taxon>
        <taxon>Mollicutes</taxon>
        <taxon>Acholeplasmatales</taxon>
        <taxon>Acholeplasmataceae</taxon>
        <taxon>Acholeplasma</taxon>
    </lineage>
</organism>
<reference key="1">
    <citation type="journal article" date="2011" name="J. Bacteriol.">
        <title>Complete genome and proteome of Acholeplasma laidlawii.</title>
        <authorList>
            <person name="Lazarev V.N."/>
            <person name="Levitskii S.A."/>
            <person name="Basovskii Y.I."/>
            <person name="Chukin M.M."/>
            <person name="Akopian T.A."/>
            <person name="Vereshchagin V.V."/>
            <person name="Kostrjukova E.S."/>
            <person name="Kovaleva G.Y."/>
            <person name="Kazanov M.D."/>
            <person name="Malko D.B."/>
            <person name="Vitreschak A.G."/>
            <person name="Sernova N.V."/>
            <person name="Gelfand M.S."/>
            <person name="Demina I.A."/>
            <person name="Serebryakova M.V."/>
            <person name="Galyamina M.A."/>
            <person name="Vtyurin N.N."/>
            <person name="Rogov S.I."/>
            <person name="Alexeev D.G."/>
            <person name="Ladygina V.G."/>
            <person name="Govorun V.M."/>
        </authorList>
    </citation>
    <scope>NUCLEOTIDE SEQUENCE [LARGE SCALE GENOMIC DNA]</scope>
    <source>
        <strain>PG-8A</strain>
    </source>
</reference>